<sequence length="228" mass="26751">MVDYLALLSSQNPYDRLDGWFKIDWLIQNNIVTKEKLIEMKDKFLDLLSYNDDTVKLHAWRMVPQLINKGIITVKDVKKYDFLSLLYDSEAWLLVKDLVNSGVIDIESVKKEKEKYIALLKGNELDRIASWSLILDIVNLGIIDKNDVENNKKYLLELFNFPAYDIRFNLLFLVAELISKGVLSPKELEPYEKKIEEIVKDKDFNQFVKIYEKDPRELESIGIHVFNS</sequence>
<proteinExistence type="evidence at transcript level"/>
<feature type="chain" id="PRO_0000066504" description="Uncharacterized protein in sor 5'region">
    <location>
        <begin position="1"/>
        <end position="228"/>
    </location>
</feature>
<organism>
    <name type="scientific">Acidianus ambivalens</name>
    <name type="common">Desulfurolobus ambivalens</name>
    <dbReference type="NCBI Taxonomy" id="2283"/>
    <lineage>
        <taxon>Archaea</taxon>
        <taxon>Thermoproteota</taxon>
        <taxon>Thermoprotei</taxon>
        <taxon>Sulfolobales</taxon>
        <taxon>Sulfolobaceae</taxon>
        <taxon>Acidianus</taxon>
    </lineage>
</organism>
<name>YSO3_ACIAM</name>
<dbReference type="EMBL" id="X56616">
    <property type="protein sequence ID" value="CAB56752.1"/>
    <property type="molecule type" value="Genomic_DNA"/>
</dbReference>
<dbReference type="PIR" id="A43331">
    <property type="entry name" value="A43331"/>
</dbReference>
<dbReference type="RefSeq" id="WP_152941503.1">
    <property type="nucleotide sequence ID" value="NZ_CP045482.1"/>
</dbReference>
<dbReference type="SMR" id="P29087"/>
<dbReference type="GeneID" id="42779581"/>
<accession>P29087</accession>
<reference key="1">
    <citation type="submission" date="1999-10" db="EMBL/GenBank/DDBJ databases">
        <authorList>
            <person name="Kletzin A."/>
            <person name="Martusewitsch E."/>
            <person name="Schleper C."/>
        </authorList>
    </citation>
    <scope>NUCLEOTIDE SEQUENCE [GENOMIC DNA]</scope>
    <source>
        <strain>Lei 10 / DSM 3772 / JCM 9191</strain>
    </source>
</reference>
<reference key="2">
    <citation type="journal article" date="1992" name="J. Bacteriol.">
        <title>Molecular characterization of the sor gene, which encodes the sulfur oxygenase/reductase of the thermoacidophilic Archaeum Desulfurolobus ambivalens.</title>
        <authorList>
            <person name="Kletzin A."/>
        </authorList>
    </citation>
    <scope>NUCLEOTIDE SEQUENCE [GENOMIC DNA] OF 1-223</scope>
    <source>
        <strain>Lei 10 / DSM 3772 / JCM 9191</strain>
    </source>
</reference>
<protein>
    <recommendedName>
        <fullName>Uncharacterized protein in sor 5'region</fullName>
    </recommendedName>
    <alternativeName>
        <fullName>ORF3</fullName>
    </alternativeName>
</protein>
<comment type="induction">
    <text>Aerobically induced.</text>
</comment>